<dbReference type="GO" id="GO:0005576">
    <property type="term" value="C:extracellular region"/>
    <property type="evidence" value="ECO:0007669"/>
    <property type="project" value="UniProtKB-SubCell"/>
</dbReference>
<dbReference type="GO" id="GO:0007218">
    <property type="term" value="P:neuropeptide signaling pathway"/>
    <property type="evidence" value="ECO:0007669"/>
    <property type="project" value="UniProtKB-KW"/>
</dbReference>
<dbReference type="InterPro" id="IPR013231">
    <property type="entry name" value="Periviscerokinin"/>
</dbReference>
<dbReference type="Pfam" id="PF08259">
    <property type="entry name" value="Periviscerokin"/>
    <property type="match status" value="1"/>
</dbReference>
<feature type="peptide" id="PRO_0000420511" description="CAPA-Periviscerokinin-1" evidence="3">
    <location>
        <begin position="1"/>
        <end position="11"/>
    </location>
</feature>
<feature type="modified residue" description="Valine amide" evidence="3">
    <location>
        <position position="11"/>
    </location>
</feature>
<sequence length="11" mass="1185">ESAGLIPFPRV</sequence>
<keyword id="KW-0027">Amidation</keyword>
<keyword id="KW-0903">Direct protein sequencing</keyword>
<keyword id="KW-0527">Neuropeptide</keyword>
<keyword id="KW-0964">Secreted</keyword>
<comment type="function">
    <text evidence="1">Mediates visceral muscle contractile activity (myotropic activity).</text>
</comment>
<comment type="subcellular location">
    <subcellularLocation>
        <location evidence="6">Secreted</location>
    </subcellularLocation>
</comment>
<comment type="similarity">
    <text evidence="2">Belongs to the periviscerokinin family.</text>
</comment>
<organism>
    <name type="scientific">Namaquaphasma ookiepense</name>
    <name type="common">Gladiator bug</name>
    <dbReference type="NCBI Taxonomy" id="409167"/>
    <lineage>
        <taxon>Eukaryota</taxon>
        <taxon>Metazoa</taxon>
        <taxon>Ecdysozoa</taxon>
        <taxon>Arthropoda</taxon>
        <taxon>Hexapoda</taxon>
        <taxon>Insecta</taxon>
        <taxon>Pterygota</taxon>
        <taxon>Neoptera</taxon>
        <taxon>Polyneoptera</taxon>
        <taxon>Mantophasmatodea</taxon>
        <taxon>Austrophasmatidae</taxon>
        <taxon>Namaquaphasma</taxon>
    </lineage>
</organism>
<name>PVK1_NAMOO</name>
<proteinExistence type="evidence at protein level"/>
<protein>
    <recommendedName>
        <fullName evidence="4">CAPA-Periviscerokinin-1</fullName>
        <shortName evidence="4">CAPA-PVK-1</shortName>
    </recommendedName>
</protein>
<accession>P86995</accession>
<evidence type="ECO:0000250" key="1">
    <source>
        <dbReference type="UniProtKB" id="P83923"/>
    </source>
</evidence>
<evidence type="ECO:0000255" key="2"/>
<evidence type="ECO:0000269" key="3">
    <source>
    </source>
</evidence>
<evidence type="ECO:0000303" key="4">
    <source>
    </source>
</evidence>
<evidence type="ECO:0000305" key="5"/>
<evidence type="ECO:0000305" key="6">
    <source>
    </source>
</evidence>
<reference evidence="5" key="1">
    <citation type="journal article" date="2012" name="Syst. Biol.">
        <title>Peptidomics-based phylogeny and biogeography of Mantophasmatodea (Hexapoda).</title>
        <authorList>
            <person name="Predel R."/>
            <person name="Neupert S."/>
            <person name="Huetteroth W."/>
            <person name="Kahnt J."/>
            <person name="Waidelich D."/>
            <person name="Roth S."/>
        </authorList>
    </citation>
    <scope>PROTEIN SEQUENCE</scope>
    <scope>AMIDATION AT VAL-11</scope>
    <source>
        <tissue evidence="3">Abdominal perisympathetic organs</tissue>
    </source>
</reference>